<feature type="chain" id="PRO_1000122379" description="Large ribosomal subunit protein bL20">
    <location>
        <begin position="1"/>
        <end position="119"/>
    </location>
</feature>
<proteinExistence type="inferred from homology"/>
<sequence>MARVKGGVVSRKRRKRILKLAKGYYGAKHILFRTAKEQVMNSYYYAYRDRRQKKRDFRKLWITRINAAARMNGLSYSQLMHGLKLAEIEVNRKMLADLAVNDAVAFTALADAAKAKLGK</sequence>
<dbReference type="EMBL" id="CP000936">
    <property type="protein sequence ID" value="ACA36966.1"/>
    <property type="molecule type" value="Genomic_DNA"/>
</dbReference>
<dbReference type="RefSeq" id="WP_000124836.1">
    <property type="nucleotide sequence ID" value="NC_010380.1"/>
</dbReference>
<dbReference type="SMR" id="B1IBC1"/>
<dbReference type="GeneID" id="45653697"/>
<dbReference type="KEGG" id="spv:SPH_1062"/>
<dbReference type="HOGENOM" id="CLU_123265_0_1_9"/>
<dbReference type="Proteomes" id="UP000002163">
    <property type="component" value="Chromosome"/>
</dbReference>
<dbReference type="GO" id="GO:1990904">
    <property type="term" value="C:ribonucleoprotein complex"/>
    <property type="evidence" value="ECO:0007669"/>
    <property type="project" value="UniProtKB-KW"/>
</dbReference>
<dbReference type="GO" id="GO:0005840">
    <property type="term" value="C:ribosome"/>
    <property type="evidence" value="ECO:0007669"/>
    <property type="project" value="UniProtKB-KW"/>
</dbReference>
<dbReference type="GO" id="GO:0019843">
    <property type="term" value="F:rRNA binding"/>
    <property type="evidence" value="ECO:0007669"/>
    <property type="project" value="UniProtKB-UniRule"/>
</dbReference>
<dbReference type="GO" id="GO:0003735">
    <property type="term" value="F:structural constituent of ribosome"/>
    <property type="evidence" value="ECO:0007669"/>
    <property type="project" value="InterPro"/>
</dbReference>
<dbReference type="GO" id="GO:0000027">
    <property type="term" value="P:ribosomal large subunit assembly"/>
    <property type="evidence" value="ECO:0007669"/>
    <property type="project" value="UniProtKB-UniRule"/>
</dbReference>
<dbReference type="GO" id="GO:0006412">
    <property type="term" value="P:translation"/>
    <property type="evidence" value="ECO:0007669"/>
    <property type="project" value="InterPro"/>
</dbReference>
<dbReference type="CDD" id="cd07026">
    <property type="entry name" value="Ribosomal_L20"/>
    <property type="match status" value="1"/>
</dbReference>
<dbReference type="FunFam" id="1.10.1900.20:FF:000001">
    <property type="entry name" value="50S ribosomal protein L20"/>
    <property type="match status" value="1"/>
</dbReference>
<dbReference type="Gene3D" id="6.10.160.10">
    <property type="match status" value="1"/>
</dbReference>
<dbReference type="Gene3D" id="1.10.1900.20">
    <property type="entry name" value="Ribosomal protein L20"/>
    <property type="match status" value="1"/>
</dbReference>
<dbReference type="HAMAP" id="MF_00382">
    <property type="entry name" value="Ribosomal_bL20"/>
    <property type="match status" value="1"/>
</dbReference>
<dbReference type="InterPro" id="IPR005813">
    <property type="entry name" value="Ribosomal_bL20"/>
</dbReference>
<dbReference type="InterPro" id="IPR049946">
    <property type="entry name" value="RIBOSOMAL_L20_CS"/>
</dbReference>
<dbReference type="InterPro" id="IPR035566">
    <property type="entry name" value="Ribosomal_protein_bL20_C"/>
</dbReference>
<dbReference type="NCBIfam" id="TIGR01032">
    <property type="entry name" value="rplT_bact"/>
    <property type="match status" value="1"/>
</dbReference>
<dbReference type="PANTHER" id="PTHR10986">
    <property type="entry name" value="39S RIBOSOMAL PROTEIN L20"/>
    <property type="match status" value="1"/>
</dbReference>
<dbReference type="Pfam" id="PF00453">
    <property type="entry name" value="Ribosomal_L20"/>
    <property type="match status" value="1"/>
</dbReference>
<dbReference type="PRINTS" id="PR00062">
    <property type="entry name" value="RIBOSOMALL20"/>
</dbReference>
<dbReference type="SUPFAM" id="SSF74731">
    <property type="entry name" value="Ribosomal protein L20"/>
    <property type="match status" value="1"/>
</dbReference>
<dbReference type="PROSITE" id="PS00937">
    <property type="entry name" value="RIBOSOMAL_L20"/>
    <property type="match status" value="1"/>
</dbReference>
<name>RL20_STRPI</name>
<organism>
    <name type="scientific">Streptococcus pneumoniae (strain Hungary19A-6)</name>
    <dbReference type="NCBI Taxonomy" id="487214"/>
    <lineage>
        <taxon>Bacteria</taxon>
        <taxon>Bacillati</taxon>
        <taxon>Bacillota</taxon>
        <taxon>Bacilli</taxon>
        <taxon>Lactobacillales</taxon>
        <taxon>Streptococcaceae</taxon>
        <taxon>Streptococcus</taxon>
    </lineage>
</organism>
<reference key="1">
    <citation type="journal article" date="2010" name="Genome Biol.">
        <title>Structure and dynamics of the pan-genome of Streptococcus pneumoniae and closely related species.</title>
        <authorList>
            <person name="Donati C."/>
            <person name="Hiller N.L."/>
            <person name="Tettelin H."/>
            <person name="Muzzi A."/>
            <person name="Croucher N.J."/>
            <person name="Angiuoli S.V."/>
            <person name="Oggioni M."/>
            <person name="Dunning Hotopp J.C."/>
            <person name="Hu F.Z."/>
            <person name="Riley D.R."/>
            <person name="Covacci A."/>
            <person name="Mitchell T.J."/>
            <person name="Bentley S.D."/>
            <person name="Kilian M."/>
            <person name="Ehrlich G.D."/>
            <person name="Rappuoli R."/>
            <person name="Moxon E.R."/>
            <person name="Masignani V."/>
        </authorList>
    </citation>
    <scope>NUCLEOTIDE SEQUENCE [LARGE SCALE GENOMIC DNA]</scope>
    <source>
        <strain>Hungary19A-6</strain>
    </source>
</reference>
<accession>B1IBC1</accession>
<evidence type="ECO:0000255" key="1">
    <source>
        <dbReference type="HAMAP-Rule" id="MF_00382"/>
    </source>
</evidence>
<evidence type="ECO:0000305" key="2"/>
<comment type="function">
    <text evidence="1">Binds directly to 23S ribosomal RNA and is necessary for the in vitro assembly process of the 50S ribosomal subunit. It is not involved in the protein synthesizing functions of that subunit.</text>
</comment>
<comment type="similarity">
    <text evidence="1">Belongs to the bacterial ribosomal protein bL20 family.</text>
</comment>
<gene>
    <name evidence="1" type="primary">rplT</name>
    <name type="ordered locus">SPH_1062</name>
</gene>
<protein>
    <recommendedName>
        <fullName evidence="1">Large ribosomal subunit protein bL20</fullName>
    </recommendedName>
    <alternativeName>
        <fullName evidence="2">50S ribosomal protein L20</fullName>
    </alternativeName>
</protein>
<keyword id="KW-0687">Ribonucleoprotein</keyword>
<keyword id="KW-0689">Ribosomal protein</keyword>
<keyword id="KW-0694">RNA-binding</keyword>
<keyword id="KW-0699">rRNA-binding</keyword>